<feature type="chain" id="PRO_0000145824" description="Tol-Pal system protein TolQ">
    <location>
        <begin position="1"/>
        <end position="228"/>
    </location>
</feature>
<feature type="transmembrane region" description="Helical" evidence="1">
    <location>
        <begin position="16"/>
        <end position="36"/>
    </location>
</feature>
<feature type="transmembrane region" description="Helical" evidence="1">
    <location>
        <begin position="137"/>
        <end position="157"/>
    </location>
</feature>
<feature type="transmembrane region" description="Helical" evidence="1">
    <location>
        <begin position="172"/>
        <end position="192"/>
    </location>
</feature>
<feature type="sequence variant" description="In strain: 1479.">
    <original>R</original>
    <variation>H</variation>
    <location>
        <position position="51"/>
    </location>
</feature>
<feature type="sequence variant" description="In strain: 1479.">
    <original>M</original>
    <variation>T</variation>
    <location>
        <position position="110"/>
    </location>
</feature>
<feature type="sequence variant" description="In strain: 1479.">
    <original>I</original>
    <variation>V</variation>
    <location>
        <position position="177"/>
    </location>
</feature>
<feature type="sequence variant" description="In strain: 1479.">
    <original>G</original>
    <variation>V</variation>
    <location>
        <position position="208"/>
    </location>
</feature>
<sequence>MTAELNFLDLFLKASIVVQLVIVILISFSIISWAIIIQRSRILTNALKEARTFEDRFWSGEDLNKLYEGLSNRRDGLTGSEQIFCVGFKEFSRLKQVNPDAPEAIIKGTMRAMNLAMNREIESLENRVPFLATVASVSPYIGLFGTVWGIMHAFMALSGAKQATLQMVAPGIAEALIATAIGLFAAIPAVMAYNRLSLRVNAIEQDYGNFIDEFTTILHRQAFGKAPH</sequence>
<accession>P43768</accession>
<accession>P94809</accession>
<proteinExistence type="inferred from homology"/>
<dbReference type="EMBL" id="L42023">
    <property type="protein sequence ID" value="AAC22043.1"/>
    <property type="molecule type" value="Genomic_DNA"/>
</dbReference>
<dbReference type="EMBL" id="U32470">
    <property type="protein sequence ID" value="AAC44594.1"/>
    <property type="molecule type" value="Genomic_DNA"/>
</dbReference>
<dbReference type="PIR" id="I64064">
    <property type="entry name" value="I64064"/>
</dbReference>
<dbReference type="RefSeq" id="NP_438546.1">
    <property type="nucleotide sequence ID" value="NC_000907.1"/>
</dbReference>
<dbReference type="SMR" id="P43768"/>
<dbReference type="STRING" id="71421.HI_0385"/>
<dbReference type="EnsemblBacteria" id="AAC22043">
    <property type="protein sequence ID" value="AAC22043"/>
    <property type="gene ID" value="HI_0385"/>
</dbReference>
<dbReference type="KEGG" id="hin:HI_0385"/>
<dbReference type="PATRIC" id="fig|71421.8.peg.403"/>
<dbReference type="eggNOG" id="COG0811">
    <property type="taxonomic scope" value="Bacteria"/>
</dbReference>
<dbReference type="HOGENOM" id="CLU_053325_2_2_6"/>
<dbReference type="OrthoDB" id="9805133at2"/>
<dbReference type="PhylomeDB" id="P43768"/>
<dbReference type="BioCyc" id="HINF71421:G1GJ1-400-MONOMER"/>
<dbReference type="Proteomes" id="UP000000579">
    <property type="component" value="Chromosome"/>
</dbReference>
<dbReference type="GO" id="GO:0005886">
    <property type="term" value="C:plasma membrane"/>
    <property type="evidence" value="ECO:0000318"/>
    <property type="project" value="GO_Central"/>
</dbReference>
<dbReference type="GO" id="GO:0043213">
    <property type="term" value="P:bacteriocin transport"/>
    <property type="evidence" value="ECO:0007669"/>
    <property type="project" value="InterPro"/>
</dbReference>
<dbReference type="GO" id="GO:0051301">
    <property type="term" value="P:cell division"/>
    <property type="evidence" value="ECO:0007669"/>
    <property type="project" value="UniProtKB-UniRule"/>
</dbReference>
<dbReference type="GO" id="GO:0017038">
    <property type="term" value="P:protein import"/>
    <property type="evidence" value="ECO:0000318"/>
    <property type="project" value="GO_Central"/>
</dbReference>
<dbReference type="HAMAP" id="MF_02202">
    <property type="entry name" value="TolQ"/>
    <property type="match status" value="1"/>
</dbReference>
<dbReference type="InterPro" id="IPR050790">
    <property type="entry name" value="ExbB/TolQ_transport"/>
</dbReference>
<dbReference type="InterPro" id="IPR002898">
    <property type="entry name" value="MotA_ExbB_proton_chnl"/>
</dbReference>
<dbReference type="InterPro" id="IPR014163">
    <property type="entry name" value="Tol-Pal_TolQ"/>
</dbReference>
<dbReference type="NCBIfam" id="TIGR02796">
    <property type="entry name" value="tolQ"/>
    <property type="match status" value="1"/>
</dbReference>
<dbReference type="PANTHER" id="PTHR30625">
    <property type="entry name" value="PROTEIN TOLQ"/>
    <property type="match status" value="1"/>
</dbReference>
<dbReference type="PANTHER" id="PTHR30625:SF3">
    <property type="entry name" value="TOL-PAL SYSTEM PROTEIN TOLQ"/>
    <property type="match status" value="1"/>
</dbReference>
<dbReference type="Pfam" id="PF01618">
    <property type="entry name" value="MotA_ExbB"/>
    <property type="match status" value="1"/>
</dbReference>
<reference key="1">
    <citation type="journal article" date="1995" name="Science">
        <title>Whole-genome random sequencing and assembly of Haemophilus influenzae Rd.</title>
        <authorList>
            <person name="Fleischmann R.D."/>
            <person name="Adams M.D."/>
            <person name="White O."/>
            <person name="Clayton R.A."/>
            <person name="Kirkness E.F."/>
            <person name="Kerlavage A.R."/>
            <person name="Bult C.J."/>
            <person name="Tomb J.-F."/>
            <person name="Dougherty B.A."/>
            <person name="Merrick J.M."/>
            <person name="McKenney K."/>
            <person name="Sutton G.G."/>
            <person name="FitzHugh W."/>
            <person name="Fields C.A."/>
            <person name="Gocayne J.D."/>
            <person name="Scott J.D."/>
            <person name="Shirley R."/>
            <person name="Liu L.-I."/>
            <person name="Glodek A."/>
            <person name="Kelley J.M."/>
            <person name="Weidman J.F."/>
            <person name="Phillips C.A."/>
            <person name="Spriggs T."/>
            <person name="Hedblom E."/>
            <person name="Cotton M.D."/>
            <person name="Utterback T.R."/>
            <person name="Hanna M.C."/>
            <person name="Nguyen D.T."/>
            <person name="Saudek D.M."/>
            <person name="Brandon R.C."/>
            <person name="Fine L.D."/>
            <person name="Fritchman J.L."/>
            <person name="Fuhrmann J.L."/>
            <person name="Geoghagen N.S.M."/>
            <person name="Gnehm C.L."/>
            <person name="McDonald L.A."/>
            <person name="Small K.V."/>
            <person name="Fraser C.M."/>
            <person name="Smith H.O."/>
            <person name="Venter J.C."/>
        </authorList>
    </citation>
    <scope>NUCLEOTIDE SEQUENCE [LARGE SCALE GENOMIC DNA]</scope>
    <source>
        <strain>ATCC 51907 / DSM 11121 / KW20 / Rd</strain>
    </source>
</reference>
<reference key="2">
    <citation type="journal article" date="1996" name="Gene">
        <title>Isolation and characterization of the Haemophilus influenzae tolQ, tolR, tolA and tolB genes.</title>
        <authorList>
            <person name="Sen K."/>
            <person name="Sikkema D.J."/>
            <person name="Murphy T.F."/>
        </authorList>
    </citation>
    <scope>NUCLEOTIDE SEQUENCE [GENOMIC DNA] OF 9-228</scope>
    <source>
        <strain>1479</strain>
    </source>
</reference>
<evidence type="ECO:0000255" key="1">
    <source>
        <dbReference type="HAMAP-Rule" id="MF_02202"/>
    </source>
</evidence>
<evidence type="ECO:0000305" key="2"/>
<comment type="function">
    <text evidence="1">Part of the Tol-Pal system, which plays a role in outer membrane invagination during cell division and is important for maintaining outer membrane integrity.</text>
</comment>
<comment type="subunit">
    <text evidence="1">The Tol-Pal system is composed of five core proteins: the inner membrane proteins TolA, TolQ and TolR, the periplasmic protein TolB and the outer membrane protein Pal. They form a network linking the inner and outer membranes and the peptidoglycan layer.</text>
</comment>
<comment type="subcellular location">
    <subcellularLocation>
        <location evidence="1 2">Cell inner membrane</location>
        <topology evidence="1 2">Multi-pass membrane protein</topology>
    </subcellularLocation>
</comment>
<comment type="similarity">
    <text evidence="1 2">Belongs to the ExbB/TolQ family.</text>
</comment>
<gene>
    <name evidence="1" type="primary">tolQ</name>
    <name type="ordered locus">HI_0385</name>
</gene>
<protein>
    <recommendedName>
        <fullName evidence="1">Tol-Pal system protein TolQ</fullName>
    </recommendedName>
</protein>
<keyword id="KW-0131">Cell cycle</keyword>
<keyword id="KW-0132">Cell division</keyword>
<keyword id="KW-0997">Cell inner membrane</keyword>
<keyword id="KW-1003">Cell membrane</keyword>
<keyword id="KW-0472">Membrane</keyword>
<keyword id="KW-1185">Reference proteome</keyword>
<keyword id="KW-0812">Transmembrane</keyword>
<keyword id="KW-1133">Transmembrane helix</keyword>
<organism>
    <name type="scientific">Haemophilus influenzae (strain ATCC 51907 / DSM 11121 / KW20 / Rd)</name>
    <dbReference type="NCBI Taxonomy" id="71421"/>
    <lineage>
        <taxon>Bacteria</taxon>
        <taxon>Pseudomonadati</taxon>
        <taxon>Pseudomonadota</taxon>
        <taxon>Gammaproteobacteria</taxon>
        <taxon>Pasteurellales</taxon>
        <taxon>Pasteurellaceae</taxon>
        <taxon>Haemophilus</taxon>
    </lineage>
</organism>
<name>TOLQ_HAEIN</name>